<comment type="function">
    <text>Thionins are small plant proteins which are toxic to animal cells. They seem to exert their toxic effect at the level of the cell membrane. Their precise function is not known.</text>
</comment>
<comment type="subcellular location">
    <subcellularLocation>
        <location evidence="3">Secreted</location>
    </subcellularLocation>
</comment>
<comment type="similarity">
    <text evidence="3">Belongs to the plant thionin (TC 1.C.44) family. 4 C-C subfamily.</text>
</comment>
<reference evidence="4" key="1">
    <citation type="journal article" date="2003" name="Biochemistry">
        <title>Structural characterization of hellethionins from Helleborus purpurascens.</title>
        <authorList>
            <person name="Milbradt A.G."/>
            <person name="Kerek F."/>
            <person name="Moroder L."/>
            <person name="Renner C."/>
        </authorList>
    </citation>
    <scope>STRUCTURE BY NMR</scope>
    <scope>DISULFIDE BONDS</scope>
</reference>
<evidence type="ECO:0000269" key="1">
    <source>
    </source>
</evidence>
<evidence type="ECO:0000303" key="2">
    <source>
    </source>
</evidence>
<evidence type="ECO:0000305" key="3"/>
<evidence type="ECO:0000312" key="4">
    <source>
        <dbReference type="PDB" id="1NBL"/>
    </source>
</evidence>
<evidence type="ECO:0007744" key="5">
    <source>
        <dbReference type="PDB" id="1NBL"/>
    </source>
</evidence>
<evidence type="ECO:0007744" key="6">
    <source>
        <dbReference type="PDB" id="3SZS"/>
    </source>
</evidence>
<evidence type="ECO:0007829" key="7">
    <source>
        <dbReference type="PDB" id="3SZS"/>
    </source>
</evidence>
<dbReference type="PDB" id="1NBL">
    <property type="method" value="NMR"/>
    <property type="chains" value="A=1-46"/>
</dbReference>
<dbReference type="PDB" id="3SZS">
    <property type="method" value="X-ray"/>
    <property type="resolution" value="1.95 A"/>
    <property type="chains" value="A/B/C/D/E/F/G=1-46"/>
</dbReference>
<dbReference type="PDBsum" id="1NBL"/>
<dbReference type="PDBsum" id="3SZS"/>
<dbReference type="BMRB" id="P60057"/>
<dbReference type="SMR" id="P60057"/>
<dbReference type="EvolutionaryTrace" id="P60057"/>
<dbReference type="GO" id="GO:0005576">
    <property type="term" value="C:extracellular region"/>
    <property type="evidence" value="ECO:0007669"/>
    <property type="project" value="UniProtKB-SubCell"/>
</dbReference>
<dbReference type="GO" id="GO:0090729">
    <property type="term" value="F:toxin activity"/>
    <property type="evidence" value="ECO:0007669"/>
    <property type="project" value="UniProtKB-KW"/>
</dbReference>
<dbReference type="GO" id="GO:0006952">
    <property type="term" value="P:defense response"/>
    <property type="evidence" value="ECO:0007669"/>
    <property type="project" value="UniProtKB-KW"/>
</dbReference>
<dbReference type="FunFam" id="3.30.1350.10:FF:000001">
    <property type="entry name" value="Hellethionin-D"/>
    <property type="match status" value="1"/>
</dbReference>
<dbReference type="Gene3D" id="3.30.1350.10">
    <property type="entry name" value="Thionin-like"/>
    <property type="match status" value="1"/>
</dbReference>
<dbReference type="InterPro" id="IPR001010">
    <property type="entry name" value="Thionin"/>
</dbReference>
<dbReference type="InterPro" id="IPR036391">
    <property type="entry name" value="Thionin-like_sf"/>
</dbReference>
<dbReference type="Pfam" id="PF00321">
    <property type="entry name" value="Thionin"/>
    <property type="match status" value="1"/>
</dbReference>
<dbReference type="PRINTS" id="PR00287">
    <property type="entry name" value="THIONIN"/>
</dbReference>
<dbReference type="SUPFAM" id="SSF57429">
    <property type="entry name" value="Crambin-like"/>
    <property type="match status" value="1"/>
</dbReference>
<dbReference type="PROSITE" id="PS00271">
    <property type="entry name" value="THIONIN"/>
    <property type="match status" value="1"/>
</dbReference>
<feature type="chain" id="PRO_0000221480" description="Hellethionin-D" evidence="1">
    <location>
        <begin position="1"/>
        <end position="46"/>
    </location>
</feature>
<feature type="disulfide bond" evidence="1 5 6">
    <location>
        <begin position="3"/>
        <end position="40"/>
    </location>
</feature>
<feature type="disulfide bond" evidence="1 5 6">
    <location>
        <begin position="4"/>
        <end position="32"/>
    </location>
</feature>
<feature type="disulfide bond" evidence="1 5 6">
    <location>
        <begin position="12"/>
        <end position="30"/>
    </location>
</feature>
<feature type="disulfide bond" evidence="1 5 6">
    <location>
        <begin position="16"/>
        <end position="26"/>
    </location>
</feature>
<feature type="strand" evidence="7">
    <location>
        <begin position="2"/>
        <end position="6"/>
    </location>
</feature>
<feature type="helix" evidence="7">
    <location>
        <begin position="7"/>
        <end position="18"/>
    </location>
</feature>
<feature type="helix" evidence="7">
    <location>
        <begin position="23"/>
        <end position="29"/>
    </location>
</feature>
<feature type="strand" evidence="7">
    <location>
        <begin position="32"/>
        <end position="39"/>
    </location>
</feature>
<sequence length="46" mass="4910">KSCCRNTLARNCYNACRFTGGSQPTCGILCDCIHVTTTTCPSSHPS</sequence>
<name>THND_HELPU</name>
<protein>
    <recommendedName>
        <fullName evidence="2">Hellethionin-D</fullName>
    </recommendedName>
</protein>
<proteinExistence type="evidence at protein level"/>
<accession>P60057</accession>
<keyword id="KW-0002">3D-structure</keyword>
<keyword id="KW-1015">Disulfide bond</keyword>
<keyword id="KW-0611">Plant defense</keyword>
<keyword id="KW-0964">Secreted</keyword>
<keyword id="KW-0800">Toxin</keyword>
<organism>
    <name type="scientific">Helleborus purpurascens</name>
    <name type="common">Purple hellebore</name>
    <dbReference type="NCBI Taxonomy" id="171899"/>
    <lineage>
        <taxon>Eukaryota</taxon>
        <taxon>Viridiplantae</taxon>
        <taxon>Streptophyta</taxon>
        <taxon>Embryophyta</taxon>
        <taxon>Tracheophyta</taxon>
        <taxon>Spermatophyta</taxon>
        <taxon>Magnoliopsida</taxon>
        <taxon>Ranunculales</taxon>
        <taxon>Ranunculaceae</taxon>
        <taxon>Ranunculoideae</taxon>
        <taxon>Helleboreae</taxon>
        <taxon>Helleborus</taxon>
    </lineage>
</organism>